<keyword id="KW-0067">ATP-binding</keyword>
<keyword id="KW-0169">Cobalamin biosynthesis</keyword>
<keyword id="KW-0315">Glutamine amidotransferase</keyword>
<keyword id="KW-0436">Ligase</keyword>
<keyword id="KW-0460">Magnesium</keyword>
<keyword id="KW-0547">Nucleotide-binding</keyword>
<keyword id="KW-1185">Reference proteome</keyword>
<gene>
    <name evidence="1" type="primary">cobB</name>
    <name type="ordered locus">PA1273</name>
</gene>
<dbReference type="EC" id="6.3.5.9" evidence="1"/>
<dbReference type="EMBL" id="AE004091">
    <property type="protein sequence ID" value="AAG04662.1"/>
    <property type="molecule type" value="Genomic_DNA"/>
</dbReference>
<dbReference type="PIR" id="G83485">
    <property type="entry name" value="G83485"/>
</dbReference>
<dbReference type="RefSeq" id="NP_249964.1">
    <property type="nucleotide sequence ID" value="NC_002516.2"/>
</dbReference>
<dbReference type="RefSeq" id="WP_003082590.1">
    <property type="nucleotide sequence ID" value="NZ_QZGE01000005.1"/>
</dbReference>
<dbReference type="SMR" id="Q9I471"/>
<dbReference type="STRING" id="208964.PA1273"/>
<dbReference type="PaxDb" id="208964-PA1273"/>
<dbReference type="GeneID" id="881727"/>
<dbReference type="KEGG" id="pae:PA1273"/>
<dbReference type="PATRIC" id="fig|208964.12.peg.1323"/>
<dbReference type="PseudoCAP" id="PA1273"/>
<dbReference type="HOGENOM" id="CLU_022752_0_2_6"/>
<dbReference type="InParanoid" id="Q9I471"/>
<dbReference type="OrthoDB" id="9764035at2"/>
<dbReference type="PhylomeDB" id="Q9I471"/>
<dbReference type="BioCyc" id="PAER208964:G1FZ6-1298-MONOMER"/>
<dbReference type="UniPathway" id="UPA00148">
    <property type="reaction ID" value="UER00220"/>
</dbReference>
<dbReference type="Proteomes" id="UP000002438">
    <property type="component" value="Chromosome"/>
</dbReference>
<dbReference type="GO" id="GO:0005524">
    <property type="term" value="F:ATP binding"/>
    <property type="evidence" value="ECO:0007669"/>
    <property type="project" value="UniProtKB-UniRule"/>
</dbReference>
<dbReference type="GO" id="GO:0042242">
    <property type="term" value="F:cobyrinic acid a,c-diamide synthase activity"/>
    <property type="evidence" value="ECO:0007669"/>
    <property type="project" value="InterPro"/>
</dbReference>
<dbReference type="GO" id="GO:0043802">
    <property type="term" value="F:hydrogenobyrinic acid a,c-diamide synthase (glutamine-hydrolysing) activity"/>
    <property type="evidence" value="ECO:0007669"/>
    <property type="project" value="UniProtKB-UniRule"/>
</dbReference>
<dbReference type="GO" id="GO:0009236">
    <property type="term" value="P:cobalamin biosynthetic process"/>
    <property type="evidence" value="ECO:0007669"/>
    <property type="project" value="UniProtKB-UniRule"/>
</dbReference>
<dbReference type="CDD" id="cd05388">
    <property type="entry name" value="CobB_N"/>
    <property type="match status" value="1"/>
</dbReference>
<dbReference type="CDD" id="cd03130">
    <property type="entry name" value="GATase1_CobB"/>
    <property type="match status" value="1"/>
</dbReference>
<dbReference type="Gene3D" id="3.40.50.880">
    <property type="match status" value="1"/>
</dbReference>
<dbReference type="Gene3D" id="3.40.50.300">
    <property type="entry name" value="P-loop containing nucleotide triphosphate hydrolases"/>
    <property type="match status" value="1"/>
</dbReference>
<dbReference type="HAMAP" id="MF_00027">
    <property type="entry name" value="CobB_CbiA"/>
    <property type="match status" value="1"/>
</dbReference>
<dbReference type="InterPro" id="IPR004484">
    <property type="entry name" value="CbiA/CobB_synth"/>
</dbReference>
<dbReference type="InterPro" id="IPR029062">
    <property type="entry name" value="Class_I_gatase-like"/>
</dbReference>
<dbReference type="InterPro" id="IPR002586">
    <property type="entry name" value="CobQ/CobB/MinD/ParA_Nub-bd_dom"/>
</dbReference>
<dbReference type="InterPro" id="IPR011698">
    <property type="entry name" value="GATase_3"/>
</dbReference>
<dbReference type="InterPro" id="IPR027417">
    <property type="entry name" value="P-loop_NTPase"/>
</dbReference>
<dbReference type="NCBIfam" id="TIGR00379">
    <property type="entry name" value="cobB"/>
    <property type="match status" value="1"/>
</dbReference>
<dbReference type="NCBIfam" id="NF002204">
    <property type="entry name" value="PRK01077.1"/>
    <property type="match status" value="1"/>
</dbReference>
<dbReference type="PANTHER" id="PTHR43873">
    <property type="entry name" value="COBYRINATE A,C-DIAMIDE SYNTHASE"/>
    <property type="match status" value="1"/>
</dbReference>
<dbReference type="PANTHER" id="PTHR43873:SF1">
    <property type="entry name" value="COBYRINATE A,C-DIAMIDE SYNTHASE"/>
    <property type="match status" value="1"/>
</dbReference>
<dbReference type="Pfam" id="PF01656">
    <property type="entry name" value="CbiA"/>
    <property type="match status" value="1"/>
</dbReference>
<dbReference type="Pfam" id="PF07685">
    <property type="entry name" value="GATase_3"/>
    <property type="match status" value="1"/>
</dbReference>
<dbReference type="SUPFAM" id="SSF52317">
    <property type="entry name" value="Class I glutamine amidotransferase-like"/>
    <property type="match status" value="1"/>
</dbReference>
<dbReference type="SUPFAM" id="SSF52540">
    <property type="entry name" value="P-loop containing nucleoside triphosphate hydrolases"/>
    <property type="match status" value="1"/>
</dbReference>
<dbReference type="PROSITE" id="PS51274">
    <property type="entry name" value="GATASE_COBBQ"/>
    <property type="match status" value="1"/>
</dbReference>
<accession>Q9I471</accession>
<reference key="1">
    <citation type="journal article" date="2000" name="Nature">
        <title>Complete genome sequence of Pseudomonas aeruginosa PAO1, an opportunistic pathogen.</title>
        <authorList>
            <person name="Stover C.K."/>
            <person name="Pham X.-Q.T."/>
            <person name="Erwin A.L."/>
            <person name="Mizoguchi S.D."/>
            <person name="Warrener P."/>
            <person name="Hickey M.J."/>
            <person name="Brinkman F.S.L."/>
            <person name="Hufnagle W.O."/>
            <person name="Kowalik D.J."/>
            <person name="Lagrou M."/>
            <person name="Garber R.L."/>
            <person name="Goltry L."/>
            <person name="Tolentino E."/>
            <person name="Westbrock-Wadman S."/>
            <person name="Yuan Y."/>
            <person name="Brody L.L."/>
            <person name="Coulter S.N."/>
            <person name="Folger K.R."/>
            <person name="Kas A."/>
            <person name="Larbig K."/>
            <person name="Lim R.M."/>
            <person name="Smith K.A."/>
            <person name="Spencer D.H."/>
            <person name="Wong G.K.-S."/>
            <person name="Wu Z."/>
            <person name="Paulsen I.T."/>
            <person name="Reizer J."/>
            <person name="Saier M.H. Jr."/>
            <person name="Hancock R.E.W."/>
            <person name="Lory S."/>
            <person name="Olson M.V."/>
        </authorList>
    </citation>
    <scope>NUCLEOTIDE SEQUENCE [LARGE SCALE GENOMIC DNA]</scope>
    <source>
        <strain>ATCC 15692 / DSM 22644 / CIP 104116 / JCM 14847 / LMG 12228 / 1C / PRS 101 / PAO1</strain>
    </source>
</reference>
<name>COBB_PSEAE</name>
<feature type="chain" id="PRO_0000141264" description="Hydrogenobyrinate a,c-diamide synthase">
    <location>
        <begin position="1"/>
        <end position="435"/>
    </location>
</feature>
<feature type="domain" description="GATase cobBQ-type" evidence="1">
    <location>
        <begin position="239"/>
        <end position="422"/>
    </location>
</feature>
<feature type="active site" description="Nucleophile" evidence="1">
    <location>
        <position position="321"/>
    </location>
</feature>
<feature type="site" description="Increases nucleophilicity of active site Cys" evidence="1">
    <location>
        <position position="414"/>
    </location>
</feature>
<evidence type="ECO:0000255" key="1">
    <source>
        <dbReference type="HAMAP-Rule" id="MF_00027"/>
    </source>
</evidence>
<comment type="function">
    <text evidence="1">Catalyzes the ATP-dependent amidation of the two carboxylate groups at positions a and c of hydrogenobyrinate, using either L-glutamine or ammonia as the nitrogen source.</text>
</comment>
<comment type="catalytic activity">
    <reaction evidence="1">
        <text>hydrogenobyrinate + 2 L-glutamine + 2 ATP + 2 H2O = hydrogenobyrinate a,c-diamide + 2 L-glutamate + 2 ADP + 2 phosphate + 2 H(+)</text>
        <dbReference type="Rhea" id="RHEA:12544"/>
        <dbReference type="ChEBI" id="CHEBI:15377"/>
        <dbReference type="ChEBI" id="CHEBI:15378"/>
        <dbReference type="ChEBI" id="CHEBI:29985"/>
        <dbReference type="ChEBI" id="CHEBI:30616"/>
        <dbReference type="ChEBI" id="CHEBI:43474"/>
        <dbReference type="ChEBI" id="CHEBI:58359"/>
        <dbReference type="ChEBI" id="CHEBI:77873"/>
        <dbReference type="ChEBI" id="CHEBI:77874"/>
        <dbReference type="ChEBI" id="CHEBI:456216"/>
        <dbReference type="EC" id="6.3.5.9"/>
    </reaction>
</comment>
<comment type="cofactor">
    <cofactor evidence="1">
        <name>Mg(2+)</name>
        <dbReference type="ChEBI" id="CHEBI:18420"/>
    </cofactor>
</comment>
<comment type="pathway">
    <text evidence="1">Cofactor biosynthesis; adenosylcobalamin biosynthesis; cob(II)yrinate a,c-diamide from precorrin-2 (aerobic route): step 9/10.</text>
</comment>
<comment type="domain">
    <text evidence="1">Comprises of two domains. The C-terminal domain contains the binding site for glutamine and catalyzes the hydrolysis of this substrate to glutamate and ammonia. The N-terminal domain is anticipated to bind ATP and hydrogenobyrinate and catalyzes the ultimate synthesis of the diamide product. The ammonia produced via the glutaminase domain is probably translocated to the adjacent domain via a molecular tunnel, where it reacts with an activated intermediate.</text>
</comment>
<comment type="miscellaneous">
    <text evidence="1">The a and c carboxylates of hydrogenobyrinate are activated for nucleophilic attack via formation of a phosphorylated intermediate by ATP. CobB catalyzes first the amidation of the c-carboxylate, and then that of the a-carboxylate.</text>
</comment>
<comment type="similarity">
    <text evidence="1">Belongs to the CobB/CbiA family.</text>
</comment>
<sequence>MTQARCPALLIAAPASGQGKTTVTAALARLHARQGRRVRVFKCGPDFLDPMILARASGAPVYQLDLWMVGEAEARRLLARAAGEADLILIEGVMGLFDGNPSAADLARRFGVPVLGVINGAAMAQTFGALAYGLAHFQPDLPFSGVLGNRVGSQRHSDILRDCLPPGMRWFGGLPRSAEFELPSRHLGLVQAEELADLDARLDAAADALRASAETDLPEPVTFEVPAPAPLQRSLEGVRIGVARDASFAFLYQANLDLLRELGAELAFFSPLQDQALPAVDSLYLPGGYPELHLGRLQGNRAMAEAIRAHHAAGKPLLAECGGMLYLLDCLEDADGERGELLGLLPGRARLQKRLTALALQEVELPEGRLRGHTFHHSTLDCAVEPLARGVCPNGRNTAEAVFRLGRLTASYIHFYLPSNPQAAAALLAPARDAD</sequence>
<proteinExistence type="inferred from homology"/>
<protein>
    <recommendedName>
        <fullName evidence="1">Hydrogenobyrinate a,c-diamide synthase</fullName>
        <ecNumber evidence="1">6.3.5.9</ecNumber>
    </recommendedName>
    <alternativeName>
        <fullName evidence="1">Hydrogenobyrinic acid a,c-diamide synthase</fullName>
    </alternativeName>
</protein>
<organism>
    <name type="scientific">Pseudomonas aeruginosa (strain ATCC 15692 / DSM 22644 / CIP 104116 / JCM 14847 / LMG 12228 / 1C / PRS 101 / PAO1)</name>
    <dbReference type="NCBI Taxonomy" id="208964"/>
    <lineage>
        <taxon>Bacteria</taxon>
        <taxon>Pseudomonadati</taxon>
        <taxon>Pseudomonadota</taxon>
        <taxon>Gammaproteobacteria</taxon>
        <taxon>Pseudomonadales</taxon>
        <taxon>Pseudomonadaceae</taxon>
        <taxon>Pseudomonas</taxon>
    </lineage>
</organism>